<comment type="function">
    <text evidence="1">Catalyzes the isomerization of 5-dehydro-4-deoxy-D-glucuronate to 3-deoxy-D-glycero-2,5-hexodiulosonate.</text>
</comment>
<comment type="catalytic activity">
    <reaction evidence="1">
        <text>5-dehydro-4-deoxy-D-glucuronate = 3-deoxy-D-glycero-2,5-hexodiulosonate</text>
        <dbReference type="Rhea" id="RHEA:23896"/>
        <dbReference type="ChEBI" id="CHEBI:17117"/>
        <dbReference type="ChEBI" id="CHEBI:29071"/>
        <dbReference type="EC" id="5.3.1.17"/>
    </reaction>
</comment>
<comment type="cofactor">
    <cofactor evidence="1">
        <name>Zn(2+)</name>
        <dbReference type="ChEBI" id="CHEBI:29105"/>
    </cofactor>
    <text evidence="1">Binds 1 zinc ion per subunit.</text>
</comment>
<comment type="pathway">
    <text evidence="1">Glycan metabolism; pectin degradation; 2-dehydro-3-deoxy-D-gluconate from pectin: step 4/5.</text>
</comment>
<comment type="similarity">
    <text evidence="1">Belongs to the KduI family.</text>
</comment>
<protein>
    <recommendedName>
        <fullName evidence="1">4-deoxy-L-threo-5-hexosulose-uronate ketol-isomerase</fullName>
        <ecNumber evidence="1">5.3.1.17</ecNumber>
    </recommendedName>
    <alternativeName>
        <fullName evidence="1">5-keto-4-deoxyuronate isomerase</fullName>
    </alternativeName>
    <alternativeName>
        <fullName evidence="1">DKI isomerase</fullName>
    </alternativeName>
</protein>
<dbReference type="EC" id="5.3.1.17" evidence="1"/>
<dbReference type="EMBL" id="CP001393">
    <property type="protein sequence ID" value="ACM61453.1"/>
    <property type="molecule type" value="Genomic_DNA"/>
</dbReference>
<dbReference type="RefSeq" id="WP_015908706.1">
    <property type="nucleotide sequence ID" value="NC_012034.1"/>
</dbReference>
<dbReference type="SMR" id="B9MNC2"/>
<dbReference type="STRING" id="521460.Athe_2384"/>
<dbReference type="GeneID" id="31773735"/>
<dbReference type="KEGG" id="ate:Athe_2384"/>
<dbReference type="eggNOG" id="COG3717">
    <property type="taxonomic scope" value="Bacteria"/>
</dbReference>
<dbReference type="HOGENOM" id="CLU_062609_0_0_9"/>
<dbReference type="UniPathway" id="UPA00545">
    <property type="reaction ID" value="UER00826"/>
</dbReference>
<dbReference type="Proteomes" id="UP000007723">
    <property type="component" value="Chromosome"/>
</dbReference>
<dbReference type="GO" id="GO:0008697">
    <property type="term" value="F:4-deoxy-L-threo-5-hexosulose-uronate ketol-isomerase activity"/>
    <property type="evidence" value="ECO:0007669"/>
    <property type="project" value="UniProtKB-UniRule"/>
</dbReference>
<dbReference type="GO" id="GO:0008270">
    <property type="term" value="F:zinc ion binding"/>
    <property type="evidence" value="ECO:0007669"/>
    <property type="project" value="UniProtKB-UniRule"/>
</dbReference>
<dbReference type="GO" id="GO:0019698">
    <property type="term" value="P:D-galacturonate catabolic process"/>
    <property type="evidence" value="ECO:0007669"/>
    <property type="project" value="TreeGrafter"/>
</dbReference>
<dbReference type="GO" id="GO:0042840">
    <property type="term" value="P:D-glucuronate catabolic process"/>
    <property type="evidence" value="ECO:0007669"/>
    <property type="project" value="TreeGrafter"/>
</dbReference>
<dbReference type="GO" id="GO:0045490">
    <property type="term" value="P:pectin catabolic process"/>
    <property type="evidence" value="ECO:0007669"/>
    <property type="project" value="UniProtKB-UniRule"/>
</dbReference>
<dbReference type="CDD" id="cd20491">
    <property type="entry name" value="cupin_KduI_C"/>
    <property type="match status" value="1"/>
</dbReference>
<dbReference type="CDD" id="cd20294">
    <property type="entry name" value="cupin_KduI_N"/>
    <property type="match status" value="1"/>
</dbReference>
<dbReference type="Gene3D" id="2.60.120.10">
    <property type="entry name" value="Jelly Rolls"/>
    <property type="match status" value="1"/>
</dbReference>
<dbReference type="Gene3D" id="2.60.120.520">
    <property type="entry name" value="pectin degrading enzyme 5-keto 4- deoxyuronate isomerase, domain 1"/>
    <property type="match status" value="1"/>
</dbReference>
<dbReference type="HAMAP" id="MF_00687">
    <property type="entry name" value="KduI"/>
    <property type="match status" value="1"/>
</dbReference>
<dbReference type="InterPro" id="IPR007045">
    <property type="entry name" value="KduI"/>
</dbReference>
<dbReference type="InterPro" id="IPR021120">
    <property type="entry name" value="KduI/IolB_isomerase"/>
</dbReference>
<dbReference type="InterPro" id="IPR027449">
    <property type="entry name" value="KduI_N"/>
</dbReference>
<dbReference type="InterPro" id="IPR014710">
    <property type="entry name" value="RmlC-like_jellyroll"/>
</dbReference>
<dbReference type="InterPro" id="IPR011051">
    <property type="entry name" value="RmlC_Cupin_sf"/>
</dbReference>
<dbReference type="NCBIfam" id="NF002091">
    <property type="entry name" value="PRK00924.1"/>
    <property type="match status" value="1"/>
</dbReference>
<dbReference type="PANTHER" id="PTHR38461">
    <property type="entry name" value="4-DEOXY-L-THREO-5-HEXOSULOSE-URONATE KETOL-ISOMERASE"/>
    <property type="match status" value="1"/>
</dbReference>
<dbReference type="PANTHER" id="PTHR38461:SF1">
    <property type="entry name" value="4-DEOXY-L-THREO-5-HEXOSULOSE-URONATE KETOL-ISOMERASE"/>
    <property type="match status" value="1"/>
</dbReference>
<dbReference type="Pfam" id="PF04962">
    <property type="entry name" value="KduI"/>
    <property type="match status" value="1"/>
</dbReference>
<dbReference type="PIRSF" id="PIRSF006625">
    <property type="entry name" value="KduI"/>
    <property type="match status" value="1"/>
</dbReference>
<dbReference type="SUPFAM" id="SSF51182">
    <property type="entry name" value="RmlC-like cupins"/>
    <property type="match status" value="1"/>
</dbReference>
<reference key="1">
    <citation type="submission" date="2009-01" db="EMBL/GenBank/DDBJ databases">
        <title>Complete sequence of chromosome of Caldicellulosiruptor becscii DSM 6725.</title>
        <authorList>
            <person name="Lucas S."/>
            <person name="Copeland A."/>
            <person name="Lapidus A."/>
            <person name="Glavina del Rio T."/>
            <person name="Tice H."/>
            <person name="Bruce D."/>
            <person name="Goodwin L."/>
            <person name="Pitluck S."/>
            <person name="Sims D."/>
            <person name="Meincke L."/>
            <person name="Brettin T."/>
            <person name="Detter J.C."/>
            <person name="Han C."/>
            <person name="Larimer F."/>
            <person name="Land M."/>
            <person name="Hauser L."/>
            <person name="Kyrpides N."/>
            <person name="Ovchinnikova G."/>
            <person name="Kataeva I."/>
            <person name="Adams M.W.W."/>
        </authorList>
    </citation>
    <scope>NUCLEOTIDE SEQUENCE [LARGE SCALE GENOMIC DNA]</scope>
    <source>
        <strain>ATCC BAA-1888 / DSM 6725 / KCTC 15123 / Z-1320</strain>
    </source>
</reference>
<keyword id="KW-0413">Isomerase</keyword>
<keyword id="KW-0479">Metal-binding</keyword>
<keyword id="KW-0862">Zinc</keyword>
<name>KDUI_CALBD</name>
<feature type="chain" id="PRO_1000147774" description="4-deoxy-L-threo-5-hexosulose-uronate ketol-isomerase">
    <location>
        <begin position="1"/>
        <end position="276"/>
    </location>
</feature>
<feature type="binding site" evidence="1">
    <location>
        <position position="194"/>
    </location>
    <ligand>
        <name>Zn(2+)</name>
        <dbReference type="ChEBI" id="CHEBI:29105"/>
    </ligand>
</feature>
<feature type="binding site" evidence="1">
    <location>
        <position position="196"/>
    </location>
    <ligand>
        <name>Zn(2+)</name>
        <dbReference type="ChEBI" id="CHEBI:29105"/>
    </ligand>
</feature>
<feature type="binding site" evidence="1">
    <location>
        <position position="201"/>
    </location>
    <ligand>
        <name>Zn(2+)</name>
        <dbReference type="ChEBI" id="CHEBI:29105"/>
    </ligand>
</feature>
<feature type="binding site" evidence="1">
    <location>
        <position position="243"/>
    </location>
    <ligand>
        <name>Zn(2+)</name>
        <dbReference type="ChEBI" id="CHEBI:29105"/>
    </ligand>
</feature>
<accession>B9MNC2</accession>
<organism>
    <name type="scientific">Caldicellulosiruptor bescii (strain ATCC BAA-1888 / DSM 6725 / KCTC 15123 / Z-1320)</name>
    <name type="common">Anaerocellum thermophilum</name>
    <dbReference type="NCBI Taxonomy" id="521460"/>
    <lineage>
        <taxon>Bacteria</taxon>
        <taxon>Bacillati</taxon>
        <taxon>Bacillota</taxon>
        <taxon>Bacillota incertae sedis</taxon>
        <taxon>Caldicellulosiruptorales</taxon>
        <taxon>Caldicellulosiruptoraceae</taxon>
        <taxon>Caldicellulosiruptor</taxon>
    </lineage>
</organism>
<gene>
    <name evidence="1" type="primary">kduI</name>
    <name type="ordered locus">Athe_2384</name>
</gene>
<proteinExistence type="inferred from homology"/>
<evidence type="ECO:0000255" key="1">
    <source>
        <dbReference type="HAMAP-Rule" id="MF_00687"/>
    </source>
</evidence>
<sequence length="276" mass="31541">MEVRFAMHPSQFKALTTEQIRKEFLIENLFEYGKINMVYTHVDRVIVGSAVPTVEALVLEDGSQIGAQYFLERREIGIINIGSRGYVIADGQKFELDKKDGLYVGMSTKKLEFGSDDPSNPAKFYFVSTPAHKQYPTEKIDIKQTEATHLGSLSESNERTIYKYIHPDGVKSCQLVMGMTILEPNNVWNTMPCHLHDRRMEVYFYFDMPEDAFVLHLMGEPNETRHIIVRNEQAVISPSWSIHSGVGTKNYTFIWAMAGENQSYSDISPVPMKELK</sequence>